<feature type="chain" id="PRO_0000440168" description="BAHD acyltransferase BIA1">
    <location>
        <begin position="1"/>
        <end position="435"/>
    </location>
</feature>
<feature type="active site" description="Proton acceptor" evidence="1">
    <location>
        <position position="151"/>
    </location>
</feature>
<feature type="active site" description="Proton acceptor" evidence="1">
    <location>
        <position position="369"/>
    </location>
</feature>
<sequence length="435" mass="48023">MEAKLEVTGKEVIKPASPSPRDRLQLSILDLYCPGIYVSTIFFYDLITESSEVFSENLKLSLSETLSRFYPLAGRIEGLSISCNDEGAVFTEARTDLLLPDFLRNLNTDSLSGFLPTLAAGESPAAWPLLSVKVTFFGSGSGVAVSVSVSHKICDIASLVTFVKDWATTTAKGKSNSTIEFAETTIYPPPPSHMYEQFPSTDSDSNITSKYVLKRFVFEPSKIAELKHKAASESVPVPTRVEAIMSLIWRCARNSSRSNLLIPRQAVMWQAMDIRLRIPSSVAPKDVIGNLQSGFSLKKDAESEFEIPEIVATFRKNKERVNEMIKESLQGNTIGQSLLSLMAETVSESTEIDRYIMSSWCRKPFYEVDFGSGSPVWVGYASHTIYDNMVGVVLIDSKEGDGVEAWISLPEEDMSVFVDDQELLAYAVLNPPVVA</sequence>
<reference key="1">
    <citation type="journal article" date="1998" name="Nature">
        <title>Analysis of 1.9 Mb of contiguous sequence from chromosome 4 of Arabidopsis thaliana.</title>
        <authorList>
            <person name="Bevan M."/>
            <person name="Bancroft I."/>
            <person name="Bent E."/>
            <person name="Love K."/>
            <person name="Goodman H.M."/>
            <person name="Dean C."/>
            <person name="Bergkamp R."/>
            <person name="Dirkse W."/>
            <person name="van Staveren M."/>
            <person name="Stiekema W."/>
            <person name="Drost L."/>
            <person name="Ridley P."/>
            <person name="Hudson S.-A."/>
            <person name="Patel K."/>
            <person name="Murphy G."/>
            <person name="Piffanelli P."/>
            <person name="Wedler H."/>
            <person name="Wedler E."/>
            <person name="Wambutt R."/>
            <person name="Weitzenegger T."/>
            <person name="Pohl T."/>
            <person name="Terryn N."/>
            <person name="Gielen J."/>
            <person name="Villarroel R."/>
            <person name="De Clercq R."/>
            <person name="van Montagu M."/>
            <person name="Lecharny A."/>
            <person name="Aubourg S."/>
            <person name="Gy I."/>
            <person name="Kreis M."/>
            <person name="Lao N."/>
            <person name="Kavanagh T."/>
            <person name="Hempel S."/>
            <person name="Kotter P."/>
            <person name="Entian K.-D."/>
            <person name="Rieger M."/>
            <person name="Schaefer M."/>
            <person name="Funk B."/>
            <person name="Mueller-Auer S."/>
            <person name="Silvey M."/>
            <person name="James R."/>
            <person name="Monfort A."/>
            <person name="Pons A."/>
            <person name="Puigdomenech P."/>
            <person name="Douka A."/>
            <person name="Voukelatou E."/>
            <person name="Milioni D."/>
            <person name="Hatzopoulos P."/>
            <person name="Piravandi E."/>
            <person name="Obermaier B."/>
            <person name="Hilbert H."/>
            <person name="Duesterhoeft A."/>
            <person name="Moores T."/>
            <person name="Jones J.D.G."/>
            <person name="Eneva T."/>
            <person name="Palme K."/>
            <person name="Benes V."/>
            <person name="Rechmann S."/>
            <person name="Ansorge W."/>
            <person name="Cooke R."/>
            <person name="Berger C."/>
            <person name="Delseny M."/>
            <person name="Voet M."/>
            <person name="Volckaert G."/>
            <person name="Mewes H.-W."/>
            <person name="Klosterman S."/>
            <person name="Schueller C."/>
            <person name="Chalwatzis N."/>
        </authorList>
    </citation>
    <scope>NUCLEOTIDE SEQUENCE [LARGE SCALE GENOMIC DNA]</scope>
    <source>
        <strain>cv. Columbia</strain>
    </source>
</reference>
<reference key="2">
    <citation type="journal article" date="1999" name="Nature">
        <title>Sequence and analysis of chromosome 4 of the plant Arabidopsis thaliana.</title>
        <authorList>
            <person name="Mayer K.F.X."/>
            <person name="Schueller C."/>
            <person name="Wambutt R."/>
            <person name="Murphy G."/>
            <person name="Volckaert G."/>
            <person name="Pohl T."/>
            <person name="Duesterhoeft A."/>
            <person name="Stiekema W."/>
            <person name="Entian K.-D."/>
            <person name="Terryn N."/>
            <person name="Harris B."/>
            <person name="Ansorge W."/>
            <person name="Brandt P."/>
            <person name="Grivell L.A."/>
            <person name="Rieger M."/>
            <person name="Weichselgartner M."/>
            <person name="de Simone V."/>
            <person name="Obermaier B."/>
            <person name="Mache R."/>
            <person name="Mueller M."/>
            <person name="Kreis M."/>
            <person name="Delseny M."/>
            <person name="Puigdomenech P."/>
            <person name="Watson M."/>
            <person name="Schmidtheini T."/>
            <person name="Reichert B."/>
            <person name="Portetelle D."/>
            <person name="Perez-Alonso M."/>
            <person name="Boutry M."/>
            <person name="Bancroft I."/>
            <person name="Vos P."/>
            <person name="Hoheisel J."/>
            <person name="Zimmermann W."/>
            <person name="Wedler H."/>
            <person name="Ridley P."/>
            <person name="Langham S.-A."/>
            <person name="McCullagh B."/>
            <person name="Bilham L."/>
            <person name="Robben J."/>
            <person name="van der Schueren J."/>
            <person name="Grymonprez B."/>
            <person name="Chuang Y.-J."/>
            <person name="Vandenbussche F."/>
            <person name="Braeken M."/>
            <person name="Weltjens I."/>
            <person name="Voet M."/>
            <person name="Bastiaens I."/>
            <person name="Aert R."/>
            <person name="Defoor E."/>
            <person name="Weitzenegger T."/>
            <person name="Bothe G."/>
            <person name="Ramsperger U."/>
            <person name="Hilbert H."/>
            <person name="Braun M."/>
            <person name="Holzer E."/>
            <person name="Brandt A."/>
            <person name="Peters S."/>
            <person name="van Staveren M."/>
            <person name="Dirkse W."/>
            <person name="Mooijman P."/>
            <person name="Klein Lankhorst R."/>
            <person name="Rose M."/>
            <person name="Hauf J."/>
            <person name="Koetter P."/>
            <person name="Berneiser S."/>
            <person name="Hempel S."/>
            <person name="Feldpausch M."/>
            <person name="Lamberth S."/>
            <person name="Van den Daele H."/>
            <person name="De Keyser A."/>
            <person name="Buysshaert C."/>
            <person name="Gielen J."/>
            <person name="Villarroel R."/>
            <person name="De Clercq R."/>
            <person name="van Montagu M."/>
            <person name="Rogers J."/>
            <person name="Cronin A."/>
            <person name="Quail M.A."/>
            <person name="Bray-Allen S."/>
            <person name="Clark L."/>
            <person name="Doggett J."/>
            <person name="Hall S."/>
            <person name="Kay M."/>
            <person name="Lennard N."/>
            <person name="McLay K."/>
            <person name="Mayes R."/>
            <person name="Pettett A."/>
            <person name="Rajandream M.A."/>
            <person name="Lyne M."/>
            <person name="Benes V."/>
            <person name="Rechmann S."/>
            <person name="Borkova D."/>
            <person name="Bloecker H."/>
            <person name="Scharfe M."/>
            <person name="Grimm M."/>
            <person name="Loehnert T.-H."/>
            <person name="Dose S."/>
            <person name="de Haan M."/>
            <person name="Maarse A.C."/>
            <person name="Schaefer M."/>
            <person name="Mueller-Auer S."/>
            <person name="Gabel C."/>
            <person name="Fuchs M."/>
            <person name="Fartmann B."/>
            <person name="Granderath K."/>
            <person name="Dauner D."/>
            <person name="Herzl A."/>
            <person name="Neumann S."/>
            <person name="Argiriou A."/>
            <person name="Vitale D."/>
            <person name="Liguori R."/>
            <person name="Piravandi E."/>
            <person name="Massenet O."/>
            <person name="Quigley F."/>
            <person name="Clabauld G."/>
            <person name="Muendlein A."/>
            <person name="Felber R."/>
            <person name="Schnabl S."/>
            <person name="Hiller R."/>
            <person name="Schmidt W."/>
            <person name="Lecharny A."/>
            <person name="Aubourg S."/>
            <person name="Chefdor F."/>
            <person name="Cooke R."/>
            <person name="Berger C."/>
            <person name="Monfort A."/>
            <person name="Casacuberta E."/>
            <person name="Gibbons T."/>
            <person name="Weber N."/>
            <person name="Vandenbol M."/>
            <person name="Bargues M."/>
            <person name="Terol J."/>
            <person name="Torres A."/>
            <person name="Perez-Perez A."/>
            <person name="Purnelle B."/>
            <person name="Bent E."/>
            <person name="Johnson S."/>
            <person name="Tacon D."/>
            <person name="Jesse T."/>
            <person name="Heijnen L."/>
            <person name="Schwarz S."/>
            <person name="Scholler P."/>
            <person name="Heber S."/>
            <person name="Francs P."/>
            <person name="Bielke C."/>
            <person name="Frishman D."/>
            <person name="Haase D."/>
            <person name="Lemcke K."/>
            <person name="Mewes H.-W."/>
            <person name="Stocker S."/>
            <person name="Zaccaria P."/>
            <person name="Bevan M."/>
            <person name="Wilson R.K."/>
            <person name="de la Bastide M."/>
            <person name="Habermann K."/>
            <person name="Parnell L."/>
            <person name="Dedhia N."/>
            <person name="Gnoj L."/>
            <person name="Schutz K."/>
            <person name="Huang E."/>
            <person name="Spiegel L."/>
            <person name="Sekhon M."/>
            <person name="Murray J."/>
            <person name="Sheet P."/>
            <person name="Cordes M."/>
            <person name="Abu-Threideh J."/>
            <person name="Stoneking T."/>
            <person name="Kalicki J."/>
            <person name="Graves T."/>
            <person name="Harmon G."/>
            <person name="Edwards J."/>
            <person name="Latreille P."/>
            <person name="Courtney L."/>
            <person name="Cloud J."/>
            <person name="Abbott A."/>
            <person name="Scott K."/>
            <person name="Johnson D."/>
            <person name="Minx P."/>
            <person name="Bentley D."/>
            <person name="Fulton B."/>
            <person name="Miller N."/>
            <person name="Greco T."/>
            <person name="Kemp K."/>
            <person name="Kramer J."/>
            <person name="Fulton L."/>
            <person name="Mardis E."/>
            <person name="Dante M."/>
            <person name="Pepin K."/>
            <person name="Hillier L.W."/>
            <person name="Nelson J."/>
            <person name="Spieth J."/>
            <person name="Ryan E."/>
            <person name="Andrews S."/>
            <person name="Geisel C."/>
            <person name="Layman D."/>
            <person name="Du H."/>
            <person name="Ali J."/>
            <person name="Berghoff A."/>
            <person name="Jones K."/>
            <person name="Drone K."/>
            <person name="Cotton M."/>
            <person name="Joshu C."/>
            <person name="Antonoiu B."/>
            <person name="Zidanic M."/>
            <person name="Strong C."/>
            <person name="Sun H."/>
            <person name="Lamar B."/>
            <person name="Yordan C."/>
            <person name="Ma P."/>
            <person name="Zhong J."/>
            <person name="Preston R."/>
            <person name="Vil D."/>
            <person name="Shekher M."/>
            <person name="Matero A."/>
            <person name="Shah R."/>
            <person name="Swaby I.K."/>
            <person name="O'Shaughnessy A."/>
            <person name="Rodriguez M."/>
            <person name="Hoffman J."/>
            <person name="Till S."/>
            <person name="Granat S."/>
            <person name="Shohdy N."/>
            <person name="Hasegawa A."/>
            <person name="Hameed A."/>
            <person name="Lodhi M."/>
            <person name="Johnson A."/>
            <person name="Chen E."/>
            <person name="Marra M.A."/>
            <person name="Martienssen R."/>
            <person name="McCombie W.R."/>
        </authorList>
    </citation>
    <scope>NUCLEOTIDE SEQUENCE [LARGE SCALE GENOMIC DNA]</scope>
    <source>
        <strain>cv. Columbia</strain>
    </source>
</reference>
<reference key="3">
    <citation type="journal article" date="2017" name="Plant J.">
        <title>Araport11: a complete reannotation of the Arabidopsis thaliana reference genome.</title>
        <authorList>
            <person name="Cheng C.Y."/>
            <person name="Krishnakumar V."/>
            <person name="Chan A.P."/>
            <person name="Thibaud-Nissen F."/>
            <person name="Schobel S."/>
            <person name="Town C.D."/>
        </authorList>
    </citation>
    <scope>GENOME REANNOTATION</scope>
    <source>
        <strain>cv. Columbia</strain>
    </source>
</reference>
<reference key="4">
    <citation type="submission" date="2005-05" db="EMBL/GenBank/DDBJ databases">
        <title>Arabidopsis ORF clones.</title>
        <authorList>
            <person name="Cheuk R.F."/>
            <person name="Chen H."/>
            <person name="Kim C.J."/>
            <person name="Shinn P."/>
            <person name="Ecker J.R."/>
        </authorList>
    </citation>
    <scope>NUCLEOTIDE SEQUENCE [LARGE SCALE MRNA]</scope>
    <source>
        <strain>cv. Columbia</strain>
    </source>
</reference>
<reference key="5">
    <citation type="journal article" date="2012" name="J. Exp. Bot.">
        <title>Overexpression of a putative Arabidopsis BAHD acyltransferase causes dwarfism that can be rescued by brassinosteroid.</title>
        <authorList>
            <person name="Wang M."/>
            <person name="Liu X."/>
            <person name="Wang R."/>
            <person name="Li W."/>
            <person name="Rodermel S."/>
            <person name="Yu F."/>
        </authorList>
    </citation>
    <scope>FUNCTION</scope>
    <scope>INDUCTION BY BRASSINOSTEROIDS</scope>
    <scope>TISSUE SPECIFICITY</scope>
    <scope>SUBCELLULAR LOCATION</scope>
    <source>
        <strain>cv. Columbia</strain>
    </source>
</reference>
<reference key="6">
    <citation type="journal article" date="2012" name="Plant Physiol.">
        <title>Genetic evidence for the reduction of brassinosteroid levels by a BAHD acyltransferase-like protein in Arabidopsis.</title>
        <authorList>
            <person name="Roh H."/>
            <person name="Jeong C.W."/>
            <person name="Fujioka S."/>
            <person name="Kim Y.K."/>
            <person name="Lee S."/>
            <person name="Ahn J.H."/>
            <person name="Choi Y.D."/>
            <person name="Lee J.S."/>
        </authorList>
    </citation>
    <scope>FUNCTION</scope>
    <scope>TISSUE SPECIFICITY</scope>
    <scope>SUBCELLULAR LOCATION</scope>
    <scope>INDUCTION BY DARKNESS AND BRASSINOSTEROIDS</scope>
    <source>
        <strain>cv. Columbia</strain>
    </source>
</reference>
<keyword id="KW-0012">Acyltransferase</keyword>
<keyword id="KW-1070">Brassinosteroid signaling pathway</keyword>
<keyword id="KW-0963">Cytoplasm</keyword>
<keyword id="KW-1185">Reference proteome</keyword>
<keyword id="KW-0808">Transferase</keyword>
<dbReference type="EC" id="2.3.1.-"/>
<dbReference type="EMBL" id="Z97338">
    <property type="protein sequence ID" value="CAB10319.1"/>
    <property type="molecule type" value="Genomic_DNA"/>
</dbReference>
<dbReference type="EMBL" id="AL161541">
    <property type="protein sequence ID" value="CAB78582.1"/>
    <property type="molecule type" value="Genomic_DNA"/>
</dbReference>
<dbReference type="EMBL" id="CP002687">
    <property type="protein sequence ID" value="AEE83596.1"/>
    <property type="molecule type" value="Genomic_DNA"/>
</dbReference>
<dbReference type="EMBL" id="BT023456">
    <property type="protein sequence ID" value="AAY56447.1"/>
    <property type="molecule type" value="mRNA"/>
</dbReference>
<dbReference type="PIR" id="E71418">
    <property type="entry name" value="E71418"/>
</dbReference>
<dbReference type="RefSeq" id="NP_193275.1">
    <property type="nucleotide sequence ID" value="NM_117628.4"/>
</dbReference>
<dbReference type="SMR" id="O23393"/>
<dbReference type="FunCoup" id="O23393">
    <property type="interactions" value="1"/>
</dbReference>
<dbReference type="STRING" id="3702.O23393"/>
<dbReference type="PaxDb" id="3702-AT4G15400.1"/>
<dbReference type="ProteomicsDB" id="240343"/>
<dbReference type="EnsemblPlants" id="AT4G15400.1">
    <property type="protein sequence ID" value="AT4G15400.1"/>
    <property type="gene ID" value="AT4G15400"/>
</dbReference>
<dbReference type="GeneID" id="827208"/>
<dbReference type="Gramene" id="AT4G15400.1">
    <property type="protein sequence ID" value="AT4G15400.1"/>
    <property type="gene ID" value="AT4G15400"/>
</dbReference>
<dbReference type="KEGG" id="ath:AT4G15400"/>
<dbReference type="Araport" id="AT4G15400"/>
<dbReference type="TAIR" id="AT4G15400">
    <property type="gene designation" value="BIA1"/>
</dbReference>
<dbReference type="eggNOG" id="ENOG502QQQA">
    <property type="taxonomic scope" value="Eukaryota"/>
</dbReference>
<dbReference type="HOGENOM" id="CLU_014546_0_0_1"/>
<dbReference type="InParanoid" id="O23393"/>
<dbReference type="OMA" id="RYIMSSW"/>
<dbReference type="PhylomeDB" id="O23393"/>
<dbReference type="BioCyc" id="ARA:AT4G15400-MONOMER"/>
<dbReference type="PRO" id="PR:O23393"/>
<dbReference type="Proteomes" id="UP000006548">
    <property type="component" value="Chromosome 4"/>
</dbReference>
<dbReference type="ExpressionAtlas" id="O23393">
    <property type="expression patterns" value="baseline and differential"/>
</dbReference>
<dbReference type="GO" id="GO:0005829">
    <property type="term" value="C:cytosol"/>
    <property type="evidence" value="ECO:0000314"/>
    <property type="project" value="TAIR"/>
</dbReference>
<dbReference type="GO" id="GO:0016746">
    <property type="term" value="F:acyltransferase activity"/>
    <property type="evidence" value="ECO:0007669"/>
    <property type="project" value="UniProtKB-KW"/>
</dbReference>
<dbReference type="GO" id="GO:0010268">
    <property type="term" value="P:brassinosteroid homeostasis"/>
    <property type="evidence" value="ECO:0000315"/>
    <property type="project" value="UniProtKB"/>
</dbReference>
<dbReference type="GO" id="GO:0009742">
    <property type="term" value="P:brassinosteroid mediated signaling pathway"/>
    <property type="evidence" value="ECO:0000315"/>
    <property type="project" value="TAIR"/>
</dbReference>
<dbReference type="GO" id="GO:0016131">
    <property type="term" value="P:brassinosteroid metabolic process"/>
    <property type="evidence" value="ECO:0000315"/>
    <property type="project" value="TAIR"/>
</dbReference>
<dbReference type="GO" id="GO:0010422">
    <property type="term" value="P:regulation of brassinosteroid biosynthetic process"/>
    <property type="evidence" value="ECO:0000315"/>
    <property type="project" value="UniProtKB"/>
</dbReference>
<dbReference type="GO" id="GO:0009962">
    <property type="term" value="P:regulation of flavonoid biosynthetic process"/>
    <property type="evidence" value="ECO:0000315"/>
    <property type="project" value="UniProtKB"/>
</dbReference>
<dbReference type="GO" id="GO:0009646">
    <property type="term" value="P:response to absence of light"/>
    <property type="evidence" value="ECO:0000270"/>
    <property type="project" value="UniProtKB"/>
</dbReference>
<dbReference type="GO" id="GO:0009741">
    <property type="term" value="P:response to brassinosteroid"/>
    <property type="evidence" value="ECO:0000270"/>
    <property type="project" value="UniProtKB"/>
</dbReference>
<dbReference type="Gene3D" id="3.30.559.10">
    <property type="entry name" value="Chloramphenicol acetyltransferase-like domain"/>
    <property type="match status" value="2"/>
</dbReference>
<dbReference type="InterPro" id="IPR023213">
    <property type="entry name" value="CAT-like_dom_sf"/>
</dbReference>
<dbReference type="PANTHER" id="PTHR31623:SF119">
    <property type="entry name" value="BAHD ACYLTRANSFERASE BIA1"/>
    <property type="match status" value="1"/>
</dbReference>
<dbReference type="PANTHER" id="PTHR31623">
    <property type="entry name" value="F21J9.9"/>
    <property type="match status" value="1"/>
</dbReference>
<dbReference type="Pfam" id="PF02458">
    <property type="entry name" value="Transferase"/>
    <property type="match status" value="1"/>
</dbReference>
<evidence type="ECO:0000255" key="1"/>
<evidence type="ECO:0000269" key="2">
    <source>
    </source>
</evidence>
<evidence type="ECO:0000269" key="3">
    <source>
    </source>
</evidence>
<evidence type="ECO:0000303" key="4">
    <source>
    </source>
</evidence>
<evidence type="ECO:0000303" key="5">
    <source>
    </source>
</evidence>
<evidence type="ECO:0000305" key="6"/>
<evidence type="ECO:0000312" key="7">
    <source>
        <dbReference type="Araport" id="AT4G15400"/>
    </source>
</evidence>
<evidence type="ECO:0000312" key="8">
    <source>
        <dbReference type="EMBL" id="CAB10319.1"/>
    </source>
</evidence>
<evidence type="ECO:0000312" key="9">
    <source>
        <dbReference type="EMBL" id="CAB78582.1"/>
    </source>
</evidence>
<proteinExistence type="evidence at transcript level"/>
<protein>
    <recommendedName>
        <fullName evidence="5">BAHD acyltransferase BIA1</fullName>
        <ecNumber>2.3.1.-</ecNumber>
    </recommendedName>
    <alternativeName>
        <fullName evidence="5">Protein ABNORMAL SHOOT 1</fullName>
    </alternativeName>
    <alternativeName>
        <fullName evidence="4">Protein BRASSINOSTEROID INACTIVATOR 1</fullName>
    </alternativeName>
</protein>
<comment type="function">
    <text evidence="2 3">Monitors brassinosteroids (BR) responses and homeostasis, particularly in the root and hypocotyl in darkness (PubMed:22544867, PubMed:22956280). Promotes flavonoid biosynthesis (PubMed:22956280).</text>
</comment>
<comment type="subcellular location">
    <subcellularLocation>
        <location evidence="2 3">Cytoplasm</location>
    </subcellularLocation>
</comment>
<comment type="tissue specificity">
    <text evidence="2 3">Mostly expressed in roots (particularly in the root elongation zone), and, to a lower extent, in seedling, leaves (especially in hydathodes), siliques (e.g. in developing seeds) and flowers.</text>
</comment>
<comment type="induction">
    <text evidence="2 3">Accumulates in response to brassinosteroids (BR) treatment (PubMed:22544867, PubMed:22956280). Induced by darkness in roots (PubMed:22544867).</text>
</comment>
<comment type="similarity">
    <text evidence="6">Belongs to the plant acyltransferase family.</text>
</comment>
<organism>
    <name type="scientific">Arabidopsis thaliana</name>
    <name type="common">Mouse-ear cress</name>
    <dbReference type="NCBI Taxonomy" id="3702"/>
    <lineage>
        <taxon>Eukaryota</taxon>
        <taxon>Viridiplantae</taxon>
        <taxon>Streptophyta</taxon>
        <taxon>Embryophyta</taxon>
        <taxon>Tracheophyta</taxon>
        <taxon>Spermatophyta</taxon>
        <taxon>Magnoliopsida</taxon>
        <taxon>eudicotyledons</taxon>
        <taxon>Gunneridae</taxon>
        <taxon>Pentapetalae</taxon>
        <taxon>rosids</taxon>
        <taxon>malvids</taxon>
        <taxon>Brassicales</taxon>
        <taxon>Brassicaceae</taxon>
        <taxon>Camelineae</taxon>
        <taxon>Arabidopsis</taxon>
    </lineage>
</organism>
<accession>O23393</accession>
<gene>
    <name evidence="4" type="primary">BIA1</name>
    <name evidence="5" type="synonym">ABS1</name>
    <name evidence="7" type="ordered locus">At4g15400</name>
    <name evidence="8" type="ORF">Dl3745c</name>
    <name evidence="9" type="ORF">FCAALL.284</name>
</gene>
<name>BIA1_ARATH</name>